<organism>
    <name type="scientific">Eremothecium gossypii (strain ATCC 10895 / CBS 109.51 / FGSC 9923 / NRRL Y-1056)</name>
    <name type="common">Yeast</name>
    <name type="synonym">Ashbya gossypii</name>
    <dbReference type="NCBI Taxonomy" id="284811"/>
    <lineage>
        <taxon>Eukaryota</taxon>
        <taxon>Fungi</taxon>
        <taxon>Dikarya</taxon>
        <taxon>Ascomycota</taxon>
        <taxon>Saccharomycotina</taxon>
        <taxon>Saccharomycetes</taxon>
        <taxon>Saccharomycetales</taxon>
        <taxon>Saccharomycetaceae</taxon>
        <taxon>Eremothecium</taxon>
    </lineage>
</organism>
<name>DEF1_EREGS</name>
<reference key="1">
    <citation type="journal article" date="2004" name="Science">
        <title>The Ashbya gossypii genome as a tool for mapping the ancient Saccharomyces cerevisiae genome.</title>
        <authorList>
            <person name="Dietrich F.S."/>
            <person name="Voegeli S."/>
            <person name="Brachat S."/>
            <person name="Lerch A."/>
            <person name="Gates K."/>
            <person name="Steiner S."/>
            <person name="Mohr C."/>
            <person name="Poehlmann R."/>
            <person name="Luedi P."/>
            <person name="Choi S."/>
            <person name="Wing R.A."/>
            <person name="Flavier A."/>
            <person name="Gaffney T.D."/>
            <person name="Philippsen P."/>
        </authorList>
    </citation>
    <scope>NUCLEOTIDE SEQUENCE [LARGE SCALE GENOMIC DNA]</scope>
    <source>
        <strain>ATCC 10895 / CBS 109.51 / FGSC 9923 / NRRL Y-1056</strain>
    </source>
</reference>
<reference key="2">
    <citation type="journal article" date="2013" name="G3 (Bethesda)">
        <title>Genomes of Ashbya fungi isolated from insects reveal four mating-type loci, numerous translocations, lack of transposons, and distinct gene duplications.</title>
        <authorList>
            <person name="Dietrich F.S."/>
            <person name="Voegeli S."/>
            <person name="Kuo S."/>
            <person name="Philippsen P."/>
        </authorList>
    </citation>
    <scope>GENOME REANNOTATION</scope>
    <source>
        <strain>ATCC 10895 / CBS 109.51 / FGSC 9923 / NRRL Y-1056</strain>
    </source>
</reference>
<accession>Q75DE9</accession>
<dbReference type="EMBL" id="AE016815">
    <property type="protein sequence ID" value="AAS50847.2"/>
    <property type="molecule type" value="Genomic_DNA"/>
</dbReference>
<dbReference type="RefSeq" id="NP_983023.2">
    <property type="nucleotide sequence ID" value="NM_208376.2"/>
</dbReference>
<dbReference type="SMR" id="Q75DE9"/>
<dbReference type="FunCoup" id="Q75DE9">
    <property type="interactions" value="307"/>
</dbReference>
<dbReference type="STRING" id="284811.Q75DE9"/>
<dbReference type="EnsemblFungi" id="AAS50847">
    <property type="protein sequence ID" value="AAS50847"/>
    <property type="gene ID" value="AGOS_ABR077C"/>
</dbReference>
<dbReference type="GeneID" id="4619127"/>
<dbReference type="KEGG" id="ago:AGOS_ABR077C"/>
<dbReference type="eggNOG" id="ENOG502S359">
    <property type="taxonomic scope" value="Eukaryota"/>
</dbReference>
<dbReference type="HOGENOM" id="CLU_023119_0_0_1"/>
<dbReference type="InParanoid" id="Q75DE9"/>
<dbReference type="OMA" id="AGNQATH"/>
<dbReference type="OrthoDB" id="5396806at2759"/>
<dbReference type="Proteomes" id="UP000000591">
    <property type="component" value="Chromosome II"/>
</dbReference>
<dbReference type="GO" id="GO:0000781">
    <property type="term" value="C:chromosome, telomeric region"/>
    <property type="evidence" value="ECO:0007669"/>
    <property type="project" value="UniProtKB-SubCell"/>
</dbReference>
<dbReference type="GO" id="GO:0005737">
    <property type="term" value="C:cytoplasm"/>
    <property type="evidence" value="ECO:0007669"/>
    <property type="project" value="UniProtKB-SubCell"/>
</dbReference>
<dbReference type="GO" id="GO:0005634">
    <property type="term" value="C:nucleus"/>
    <property type="evidence" value="ECO:0007669"/>
    <property type="project" value="UniProtKB-SubCell"/>
</dbReference>
<dbReference type="GO" id="GO:0003677">
    <property type="term" value="F:DNA binding"/>
    <property type="evidence" value="ECO:0007669"/>
    <property type="project" value="UniProtKB-KW"/>
</dbReference>
<dbReference type="GO" id="GO:0006281">
    <property type="term" value="P:DNA repair"/>
    <property type="evidence" value="ECO:0007669"/>
    <property type="project" value="UniProtKB-KW"/>
</dbReference>
<dbReference type="CDD" id="cd14368">
    <property type="entry name" value="CUE_DEF1_like"/>
    <property type="match status" value="1"/>
</dbReference>
<dbReference type="InterPro" id="IPR041803">
    <property type="entry name" value="DEF1_CUE"/>
</dbReference>
<gene>
    <name type="primary">DEF1</name>
    <name type="ordered locus">ABR077C</name>
</gene>
<protein>
    <recommendedName>
        <fullName>RNA polymerase II degradation factor 1</fullName>
    </recommendedName>
</protein>
<feature type="chain" id="PRO_0000405661" description="RNA polymerase II degradation factor 1">
    <location>
        <begin position="1"/>
        <end position="705"/>
    </location>
</feature>
<feature type="domain" description="CUE">
    <location>
        <begin position="21"/>
        <end position="63"/>
    </location>
</feature>
<feature type="region of interest" description="Disordered" evidence="2">
    <location>
        <begin position="1"/>
        <end position="20"/>
    </location>
</feature>
<feature type="region of interest" description="Disordered" evidence="2">
    <location>
        <begin position="62"/>
        <end position="264"/>
    </location>
</feature>
<feature type="region of interest" description="Disordered" evidence="2">
    <location>
        <begin position="277"/>
        <end position="438"/>
    </location>
</feature>
<feature type="region of interest" description="Disordered" evidence="2">
    <location>
        <begin position="491"/>
        <end position="512"/>
    </location>
</feature>
<feature type="region of interest" description="Disordered" evidence="2">
    <location>
        <begin position="614"/>
        <end position="656"/>
    </location>
</feature>
<feature type="compositionally biased region" description="Basic and acidic residues" evidence="2">
    <location>
        <begin position="65"/>
        <end position="90"/>
    </location>
</feature>
<feature type="compositionally biased region" description="Low complexity" evidence="2">
    <location>
        <begin position="91"/>
        <end position="112"/>
    </location>
</feature>
<feature type="compositionally biased region" description="Polar residues" evidence="2">
    <location>
        <begin position="119"/>
        <end position="140"/>
    </location>
</feature>
<feature type="compositionally biased region" description="Low complexity" evidence="2">
    <location>
        <begin position="162"/>
        <end position="173"/>
    </location>
</feature>
<feature type="compositionally biased region" description="Low complexity" evidence="2">
    <location>
        <begin position="184"/>
        <end position="205"/>
    </location>
</feature>
<feature type="compositionally biased region" description="Basic and acidic residues" evidence="2">
    <location>
        <begin position="206"/>
        <end position="217"/>
    </location>
</feature>
<feature type="compositionally biased region" description="Basic and acidic residues" evidence="2">
    <location>
        <begin position="248"/>
        <end position="258"/>
    </location>
</feature>
<feature type="compositionally biased region" description="Basic and acidic residues" evidence="2">
    <location>
        <begin position="299"/>
        <end position="310"/>
    </location>
</feature>
<feature type="compositionally biased region" description="Low complexity" evidence="2">
    <location>
        <begin position="331"/>
        <end position="358"/>
    </location>
</feature>
<feature type="compositionally biased region" description="Low complexity" evidence="2">
    <location>
        <begin position="399"/>
        <end position="438"/>
    </location>
</feature>
<feature type="compositionally biased region" description="Low complexity" evidence="2">
    <location>
        <begin position="500"/>
        <end position="512"/>
    </location>
</feature>
<feature type="compositionally biased region" description="Polar residues" evidence="2">
    <location>
        <begin position="614"/>
        <end position="623"/>
    </location>
</feature>
<feature type="compositionally biased region" description="Low complexity" evidence="2">
    <location>
        <begin position="624"/>
        <end position="656"/>
    </location>
</feature>
<sequence>MSQQYSRRGGGKAKRTQVDAEKKFKLDTLTELFPDWTNEDLIDLVHEFEDLETIIDKITTGAVTKWDEVKKPSKKDRQQKEPAGDVEHIHAGSAAAAFGASAQAQGAPASLQRSHHSAGHQNNAKPYQRQSKYSNSPRQGKQQHQRKEKVAKENLKPAGQPAKSTASSTSWAAMLSKKEDSKLQAPEQQLEEQPQAQSQAQQTEEPVAKESQTEKKVGPQPVAAPLHEEQDSKPKKMTWAAIASKPPKHAENASKKPQEILQNVQDLKKEINKIATEDTAVEHSETTVTHSEVGVNAQAEHESFPIEDGARSVGADDTYYAENVDATNEDAAATVNGNAPAASEEAAAQEDASNANANVPVSLPAEANHQASQQVSFGSEEKQQTPQQPSQQGGMHAGQHVVSQVPQSAQHSSQAAAQTSQQVASQAPQQQTPQQAYYQDTYTQQLPQQQAQAAQAQQYYMNQYQFPGYSYPGMFDSQSAYPVYNHQQFAVPQQGQPTAQSSQNSQQAQSQSQQQQQQQQQQQQQQQQQQQQQQQQQQQYGIPPGYVQAGELAAQSPASTHTQPQQQPQYGGYGMPYYFYQQSFPYAQPQYGMAGQYPYQVPKAAYNYYQPQQMSQAGNQATHQSQSSQNDDSSSASAANPQQGQQGGANSQQQSQAAAAQAQAAAQAQFQQYYQFQQQAAANQQGMPYGYSGYDYTSQTSRGFY</sequence>
<comment type="function">
    <text evidence="1">Recruits the ubiquitination machinery to RNA polymerase II for polyubiquitination, removal and degradation, when the transcription-coupled repair (TCR) factor RAD26 fails to efficiently displace stalled RNA polymerase II. Also involved in telomere length regulation. Binds DNA.</text>
</comment>
<comment type="subunit">
    <text evidence="1">Homodimer; may form higher order oligomers. Interacts with the large RNA polymerase II subunit RPO21; the interaction is direct and serves to bridge RPO21 to the Elongin complex in a manner dependent on transcription stress. Interacts with RAD26.</text>
</comment>
<comment type="subcellular location">
    <subcellularLocation>
        <location evidence="1">Cytoplasm</location>
    </subcellularLocation>
    <subcellularLocation>
        <location evidence="1">Nucleus</location>
    </subcellularLocation>
    <subcellularLocation>
        <location evidence="1">Chromosome</location>
        <location evidence="1">Telomere</location>
    </subcellularLocation>
    <text evidence="1">During transcription stress, localizes to the nucleus following proteolytic cleavage by the proteasome.</text>
</comment>
<comment type="PTM">
    <text evidence="1">Ubiquitinated.</text>
</comment>
<comment type="PTM">
    <text evidence="1">Proteolytically cleaved by the proteasome in response to transcription stress; the resulting N-terminal form constitutes the activated nuclear form and the C-terminal portion is degraded.</text>
</comment>
<comment type="similarity">
    <text evidence="3">Belongs to the DEF1 family.</text>
</comment>
<evidence type="ECO:0000250" key="1">
    <source>
        <dbReference type="UniProtKB" id="P35732"/>
    </source>
</evidence>
<evidence type="ECO:0000256" key="2">
    <source>
        <dbReference type="SAM" id="MobiDB-lite"/>
    </source>
</evidence>
<evidence type="ECO:0000305" key="3"/>
<keyword id="KW-0158">Chromosome</keyword>
<keyword id="KW-0963">Cytoplasm</keyword>
<keyword id="KW-0227">DNA damage</keyword>
<keyword id="KW-0234">DNA repair</keyword>
<keyword id="KW-0238">DNA-binding</keyword>
<keyword id="KW-0539">Nucleus</keyword>
<keyword id="KW-1185">Reference proteome</keyword>
<keyword id="KW-0779">Telomere</keyword>
<keyword id="KW-0832">Ubl conjugation</keyword>
<keyword id="KW-0833">Ubl conjugation pathway</keyword>
<proteinExistence type="inferred from homology"/>